<name>RL17_MYCSK</name>
<accession>A1UBY6</accession>
<proteinExistence type="inferred from homology"/>
<protein>
    <recommendedName>
        <fullName evidence="1">Large ribosomal subunit protein bL17</fullName>
    </recommendedName>
    <alternativeName>
        <fullName evidence="3">50S ribosomal protein L17</fullName>
    </alternativeName>
</protein>
<feature type="chain" id="PRO_1000055884" description="Large ribosomal subunit protein bL17">
    <location>
        <begin position="1"/>
        <end position="195"/>
    </location>
</feature>
<feature type="region of interest" description="Disordered" evidence="2">
    <location>
        <begin position="125"/>
        <end position="195"/>
    </location>
</feature>
<feature type="compositionally biased region" description="Low complexity" evidence="2">
    <location>
        <begin position="136"/>
        <end position="152"/>
    </location>
</feature>
<feature type="compositionally biased region" description="Acidic residues" evidence="2">
    <location>
        <begin position="153"/>
        <end position="173"/>
    </location>
</feature>
<feature type="compositionally biased region" description="Acidic residues" evidence="2">
    <location>
        <begin position="183"/>
        <end position="195"/>
    </location>
</feature>
<keyword id="KW-0687">Ribonucleoprotein</keyword>
<keyword id="KW-0689">Ribosomal protein</keyword>
<reference key="1">
    <citation type="submission" date="2006-12" db="EMBL/GenBank/DDBJ databases">
        <title>Complete sequence of chromosome of Mycobacterium sp. KMS.</title>
        <authorList>
            <consortium name="US DOE Joint Genome Institute"/>
            <person name="Copeland A."/>
            <person name="Lucas S."/>
            <person name="Lapidus A."/>
            <person name="Barry K."/>
            <person name="Detter J.C."/>
            <person name="Glavina del Rio T."/>
            <person name="Hammon N."/>
            <person name="Israni S."/>
            <person name="Dalin E."/>
            <person name="Tice H."/>
            <person name="Pitluck S."/>
            <person name="Kiss H."/>
            <person name="Brettin T."/>
            <person name="Bruce D."/>
            <person name="Han C."/>
            <person name="Tapia R."/>
            <person name="Gilna P."/>
            <person name="Schmutz J."/>
            <person name="Larimer F."/>
            <person name="Land M."/>
            <person name="Hauser L."/>
            <person name="Kyrpides N."/>
            <person name="Mikhailova N."/>
            <person name="Miller C.D."/>
            <person name="Richardson P."/>
        </authorList>
    </citation>
    <scope>NUCLEOTIDE SEQUENCE [LARGE SCALE GENOMIC DNA]</scope>
    <source>
        <strain>KMS</strain>
    </source>
</reference>
<gene>
    <name evidence="1" type="primary">rplQ</name>
    <name type="ordered locus">Mkms_1131</name>
</gene>
<comment type="subunit">
    <text evidence="1">Part of the 50S ribosomal subunit. Contacts protein L32.</text>
</comment>
<comment type="similarity">
    <text evidence="1">Belongs to the bacterial ribosomal protein bL17 family.</text>
</comment>
<organism>
    <name type="scientific">Mycobacterium sp. (strain KMS)</name>
    <dbReference type="NCBI Taxonomy" id="189918"/>
    <lineage>
        <taxon>Bacteria</taxon>
        <taxon>Bacillati</taxon>
        <taxon>Actinomycetota</taxon>
        <taxon>Actinomycetes</taxon>
        <taxon>Mycobacteriales</taxon>
        <taxon>Mycobacteriaceae</taxon>
        <taxon>Mycobacterium</taxon>
    </lineage>
</organism>
<sequence>MPKPTKGPRLGGSSSHQKALLANLATSLFEHGRIKTTEPKARALRPYAEKLITHAKKGELHNRREVMKKIRDKDVVHTLFAEIGPFFADREGGYTRIIKVEPRKGDNAPMAVIELVREKTVTSEANRARRVGASKQTAPVAAAAAPQAAVEPEATEGPDADDSSALPEAEDTTASEASRSTETDDPTQDSDADKS</sequence>
<evidence type="ECO:0000255" key="1">
    <source>
        <dbReference type="HAMAP-Rule" id="MF_01368"/>
    </source>
</evidence>
<evidence type="ECO:0000256" key="2">
    <source>
        <dbReference type="SAM" id="MobiDB-lite"/>
    </source>
</evidence>
<evidence type="ECO:0000305" key="3"/>
<dbReference type="EMBL" id="CP000518">
    <property type="protein sequence ID" value="ABL90344.1"/>
    <property type="molecule type" value="Genomic_DNA"/>
</dbReference>
<dbReference type="SMR" id="A1UBY6"/>
<dbReference type="STRING" id="189918.Mkms_1131"/>
<dbReference type="KEGG" id="mkm:Mkms_1131"/>
<dbReference type="HOGENOM" id="CLU_074407_0_0_11"/>
<dbReference type="OrthoDB" id="9809073at2"/>
<dbReference type="GO" id="GO:0022625">
    <property type="term" value="C:cytosolic large ribosomal subunit"/>
    <property type="evidence" value="ECO:0007669"/>
    <property type="project" value="TreeGrafter"/>
</dbReference>
<dbReference type="GO" id="GO:0003735">
    <property type="term" value="F:structural constituent of ribosome"/>
    <property type="evidence" value="ECO:0007669"/>
    <property type="project" value="InterPro"/>
</dbReference>
<dbReference type="GO" id="GO:0006412">
    <property type="term" value="P:translation"/>
    <property type="evidence" value="ECO:0007669"/>
    <property type="project" value="UniProtKB-UniRule"/>
</dbReference>
<dbReference type="FunFam" id="3.90.1030.10:FF:000001">
    <property type="entry name" value="50S ribosomal protein L17"/>
    <property type="match status" value="1"/>
</dbReference>
<dbReference type="Gene3D" id="3.90.1030.10">
    <property type="entry name" value="Ribosomal protein L17"/>
    <property type="match status" value="1"/>
</dbReference>
<dbReference type="HAMAP" id="MF_01368">
    <property type="entry name" value="Ribosomal_bL17"/>
    <property type="match status" value="1"/>
</dbReference>
<dbReference type="InterPro" id="IPR000456">
    <property type="entry name" value="Ribosomal_bL17"/>
</dbReference>
<dbReference type="InterPro" id="IPR047859">
    <property type="entry name" value="Ribosomal_bL17_CS"/>
</dbReference>
<dbReference type="InterPro" id="IPR036373">
    <property type="entry name" value="Ribosomal_bL17_sf"/>
</dbReference>
<dbReference type="NCBIfam" id="TIGR00059">
    <property type="entry name" value="L17"/>
    <property type="match status" value="1"/>
</dbReference>
<dbReference type="PANTHER" id="PTHR14413:SF16">
    <property type="entry name" value="LARGE RIBOSOMAL SUBUNIT PROTEIN BL17M"/>
    <property type="match status" value="1"/>
</dbReference>
<dbReference type="PANTHER" id="PTHR14413">
    <property type="entry name" value="RIBOSOMAL PROTEIN L17"/>
    <property type="match status" value="1"/>
</dbReference>
<dbReference type="Pfam" id="PF01196">
    <property type="entry name" value="Ribosomal_L17"/>
    <property type="match status" value="1"/>
</dbReference>
<dbReference type="SUPFAM" id="SSF64263">
    <property type="entry name" value="Prokaryotic ribosomal protein L17"/>
    <property type="match status" value="1"/>
</dbReference>
<dbReference type="PROSITE" id="PS01167">
    <property type="entry name" value="RIBOSOMAL_L17"/>
    <property type="match status" value="1"/>
</dbReference>